<accession>Q4R854</accession>
<name>MGT4A_MACFA</name>
<comment type="function">
    <text evidence="1 2">Glycosyltransferase that catalyze the transfer of GlcNAc from UDP-GlcNAc to the GlcNAcbeta1-2Manalpha1-3 arm of the core structure of N-linked glycans through a beta1-4 linkage and participates in the production of tri- and tetra-antennary N-linked sugar chains (By similarity). Involved in glucose transport by mediating SLC2A2/GLUT2 glycosylation, thereby controlling cell-surface expression of SLC2A2 in pancreatic beta cells (By similarity).</text>
</comment>
<comment type="catalytic activity">
    <reaction evidence="1">
        <text>N(4)-{beta-D-GlcNAc-(1-&gt;2)-alpha-D-Man-(1-&gt;3)-[beta-D-GlcNAc-(1-&gt;2)-alpha-D-Man-(1-&gt;6)]-beta-D-Man-(1-&gt;4)-beta-D-GlcNAc-(1-&gt;4)-beta-D-GlcNAc}-L-asparaginyl-[protein] + UDP-N-acetyl-alpha-D-glucosamine = N(4)-{beta-D-GlcNAc-(1-&gt;2)-[beta-D-GlcNAc-(1-&gt;4)]-alpha-D-Man-(1-&gt;3)-[beta-D-GlcNAc-(1-&gt;2)-alpha-D-Man-(1-&gt;6)]-beta-D-Man-(1-&gt;4)-beta-D-GlcNAc-(1-&gt;4)-beta-D-GlcNAc}-L-asparaginyl-[protein] + UDP + H(+)</text>
        <dbReference type="Rhea" id="RHEA:16057"/>
        <dbReference type="Rhea" id="RHEA-COMP:13526"/>
        <dbReference type="Rhea" id="RHEA-COMP:14374"/>
        <dbReference type="ChEBI" id="CHEBI:15378"/>
        <dbReference type="ChEBI" id="CHEBI:57705"/>
        <dbReference type="ChEBI" id="CHEBI:58223"/>
        <dbReference type="ChEBI" id="CHEBI:60651"/>
        <dbReference type="ChEBI" id="CHEBI:139507"/>
        <dbReference type="EC" id="2.4.1.145"/>
    </reaction>
    <physiologicalReaction direction="left-to-right" evidence="1">
        <dbReference type="Rhea" id="RHEA:16058"/>
    </physiologicalReaction>
</comment>
<comment type="catalytic activity">
    <reaction evidence="4">
        <text>an N(4)-{beta-D-GlcNAc-(1-&gt;2)-alpha-D-Man-(1-&gt;3)-[alpha-D-Man-(1-&gt;6)]-beta-D-Man-(1-&gt;4)-beta-D-GlcNAc-(1-&gt;4)-beta-D-GlcNAc}-L-asparaginyl-[protein] + UDP-N-acetyl-alpha-D-glucosamine = an N(4)-{beta-D-GlcNAc-(1-&gt;2)-[beta-D-GlcNAc-(1-&gt;4)]-alpha-D-Man-(1-&gt;3)-[alpha-D-Man-(1-&gt;6)]-beta-D-Man-(1-&gt;4)-beta-D-GlcNAc-(1-&gt;4)-beta-D-GlcNAc}-L-asparaginyl-[protein] + UDP + H(+)</text>
        <dbReference type="Rhea" id="RHEA:69615"/>
        <dbReference type="Rhea" id="RHEA-COMP:14369"/>
        <dbReference type="Rhea" id="RHEA-COMP:17732"/>
        <dbReference type="ChEBI" id="CHEBI:15378"/>
        <dbReference type="ChEBI" id="CHEBI:57705"/>
        <dbReference type="ChEBI" id="CHEBI:58223"/>
        <dbReference type="ChEBI" id="CHEBI:60615"/>
        <dbReference type="ChEBI" id="CHEBI:187873"/>
    </reaction>
    <physiologicalReaction direction="left-to-right" evidence="4">
        <dbReference type="Rhea" id="RHEA:69616"/>
    </physiologicalReaction>
</comment>
<comment type="catalytic activity">
    <reaction evidence="4">
        <text>an N(4)-{beta-D-GlcNAc-(1-&gt;2)-alpha-D-Man-(1-&gt;3)-[beta-D-GlcNAc-(1-&gt;2)-[beta-D-GlcNAc-(1-&gt;6)]-alpha-D-Man-(1-&gt;6)]-beta-D-Man-(1-&gt;4)-beta-D-GlcNAc-(1-&gt;4)-beta-D-GlcNAc}-L-asparaginyl-[protein] + UDP-N-acetyl-alpha-D-glucosamine = an N(4)-{beta-D-GlcNAc-(1-&gt;2)-[beta-D-GlcNAc-(1-&gt;4)]-alpha-D-Man-(1-&gt;3)-[beta-D-GlcNAc-(1-&gt;2)-[beta-D-GlcNAc-(1-&gt;6)]-alpha-D-Man-(1-&gt;6)]-beta-D-Man-(1-&gt;4)-beta-D-GlcNAc-(1-&gt;4)-beta-D-GlcNAc}-L-asparaginyl-[protein] + UDP + H(+)</text>
        <dbReference type="Rhea" id="RHEA:69619"/>
        <dbReference type="Rhea" id="RHEA-COMP:17733"/>
        <dbReference type="Rhea" id="RHEA-COMP:17734"/>
        <dbReference type="ChEBI" id="CHEBI:15378"/>
        <dbReference type="ChEBI" id="CHEBI:57705"/>
        <dbReference type="ChEBI" id="CHEBI:58223"/>
        <dbReference type="ChEBI" id="CHEBI:187874"/>
        <dbReference type="ChEBI" id="CHEBI:187875"/>
    </reaction>
    <physiologicalReaction direction="left-to-right" evidence="4">
        <dbReference type="Rhea" id="RHEA:69620"/>
    </physiologicalReaction>
</comment>
<comment type="catalytic activity">
    <reaction evidence="4">
        <text>an N(4)-{beta-D-GlcNAc-(1-&gt;2)-alpha-D-Man-(1-&gt;3)-[beta-D-GlcNAc-(1-&gt;2)-alpha-D-Man-(1-&gt;6)]-beta-D-Man-(1-&gt;4)-beta-D-GlcNAc-(1-&gt;4)-[alpha-L-Fuc-(1-&gt;6)]-beta-D-GlcNAc}-L-asparaginyl-[protein] + UDP-N-acetyl-alpha-D-glucosamine = N(4)-{beta-D-GlcNAc-(1-&gt;2)-[beta-D-GlcNAc-(1-&gt;4)]-alpha-D-Man-(1-&gt;3)-[beta-D-GlcNAc-(1-&gt;2)-alpha-D-Man-(1-&gt;6)]-beta-D-Man-(1-&gt;4)-beta-D-GlcNAc-(1-&gt;4)-[alpha-L-Fuc-(1-&gt;6)]-beta-D-GlcNAc}-asparaginyl-[protein] + UDP + H(+)</text>
        <dbReference type="Rhea" id="RHEA:69623"/>
        <dbReference type="Rhea" id="RHEA-COMP:13532"/>
        <dbReference type="Rhea" id="RHEA-COMP:18198"/>
        <dbReference type="ChEBI" id="CHEBI:15378"/>
        <dbReference type="ChEBI" id="CHEBI:57705"/>
        <dbReference type="ChEBI" id="CHEBI:58223"/>
        <dbReference type="ChEBI" id="CHEBI:137207"/>
        <dbReference type="ChEBI" id="CHEBI:187877"/>
    </reaction>
    <physiologicalReaction direction="left-to-right" evidence="4">
        <dbReference type="Rhea" id="RHEA:69624"/>
    </physiologicalReaction>
</comment>
<comment type="catalytic activity">
    <reaction evidence="4">
        <text>an N(4)-{beta-D-GlcNAc-(1-&gt;2)-alpha-D-Man-(1-&gt;3)-[beta-D-Gal-(1-&gt;4)-beta-D-GlcNAc-(1-&gt;2)-alpha-D-Man-(1-&gt;6)]-beta-D-Man-(1-&gt;4)-beta-D-GlcNAc-(1-&gt;4)-beta-D-GlcNAc}-L-asparaginyl-[protein] + UDP-N-acetyl-alpha-D-glucosamine = an N(4)-{beta-D-GlcNAc-(1-&gt;2)-[beta-D-GlcNAc-(1-&gt;4)]-alpha-D-Man-(1-&gt;3)-[beta-D-Gal-(1-&gt;4)-beta-D-GlcNAc-(1-&gt;2)-alpha-D-Man-(1-&gt;6)]-beta-D-Man-(1-&gt;4)-beta-D-GlcNAc-(1-&gt;4)-beta-D-GlcNAc}-L-asparaginyl-[protein] + UDP + H(+)</text>
        <dbReference type="Rhea" id="RHEA:69627"/>
        <dbReference type="Rhea" id="RHEA-COMP:17737"/>
        <dbReference type="Rhea" id="RHEA-COMP:17738"/>
        <dbReference type="ChEBI" id="CHEBI:15378"/>
        <dbReference type="ChEBI" id="CHEBI:57705"/>
        <dbReference type="ChEBI" id="CHEBI:58223"/>
        <dbReference type="ChEBI" id="CHEBI:187878"/>
        <dbReference type="ChEBI" id="CHEBI:187879"/>
    </reaction>
    <physiologicalReaction direction="left-to-right" evidence="4">
        <dbReference type="Rhea" id="RHEA:69628"/>
    </physiologicalReaction>
</comment>
<comment type="catalytic activity">
    <reaction evidence="4">
        <text>N(4)-{beta-D-GlcNAc-(1-&gt;2)-alpha-D-Man-(1-&gt;3)-[alpha-D-Man-(1-&gt;3)-{alpha-D-Man-(1-&gt;6)}-alpha-D-Man-(1-&gt;6)]-beta-D-Man-(1-&gt;4)-beta-D-GlcNAc-(1-&gt;4)-beta-D-GlcNAc}-asparaginyl-[protein] + UDP-N-acetyl-alpha-D-glucosamine = N(4)-{beta-D-GlcNAc-(1-&gt;2)-[beta-D-GlcNAc-(1-&gt;4)]-alpha-D-Man-(1-&gt;3)-[alpha-D-Man-(1-&gt;3)-{alpha-D-Man-(1-&gt;6)}-alpha-D-Man-(1-&gt;6)]-beta-D-Man-(1-&gt;4)-beta-D-GlcNAc-(1-&gt;4)-beta-D-GlcNAc}-asparaginyl-[protein] + UDP + H(+)</text>
        <dbReference type="Rhea" id="RHEA:69631"/>
        <dbReference type="Rhea" id="RHEA-COMP:17739"/>
        <dbReference type="Rhea" id="RHEA-COMP:17740"/>
        <dbReference type="ChEBI" id="CHEBI:15378"/>
        <dbReference type="ChEBI" id="CHEBI:57705"/>
        <dbReference type="ChEBI" id="CHEBI:58223"/>
        <dbReference type="ChEBI" id="CHEBI:187880"/>
        <dbReference type="ChEBI" id="CHEBI:187881"/>
    </reaction>
    <physiologicalReaction direction="left-to-right" evidence="4">
        <dbReference type="Rhea" id="RHEA:69632"/>
    </physiologicalReaction>
</comment>
<comment type="catalytic activity">
    <reaction evidence="4">
        <text>N(4)-{beta-D-GlcNAc-(1-&gt;2)-alpha-D-Man-(1-&gt;3)-beta-D-Man-(1-&gt;4)-beta-D-GlcNAc-(1-&gt;4)-beta-D-GlcNAc}-asparaginyl-[protein] + UDP-N-acetyl-alpha-D-glucosamine = N(4)-{beta-D-GlcNAc-(1-&gt;2)-[beta-D-GlcNAc-(1-&gt;4)]-alpha-D-Man-(1-&gt;3)-beta-D-Man-(1-&gt;4)-beta-D-GlcNAc-(1-&gt;4)-beta-D-GlcNAc}-asparaginyl-[protein] + UDP + H(+)</text>
        <dbReference type="Rhea" id="RHEA:69635"/>
        <dbReference type="Rhea" id="RHEA-COMP:17741"/>
        <dbReference type="Rhea" id="RHEA-COMP:17742"/>
        <dbReference type="ChEBI" id="CHEBI:15378"/>
        <dbReference type="ChEBI" id="CHEBI:57705"/>
        <dbReference type="ChEBI" id="CHEBI:58223"/>
        <dbReference type="ChEBI" id="CHEBI:187882"/>
        <dbReference type="ChEBI" id="CHEBI:187883"/>
    </reaction>
    <physiologicalReaction direction="left-to-right" evidence="4">
        <dbReference type="Rhea" id="RHEA:69636"/>
    </physiologicalReaction>
</comment>
<comment type="cofactor">
    <cofactor evidence="1">
        <name>a divalent metal cation</name>
        <dbReference type="ChEBI" id="CHEBI:60240"/>
    </cofactor>
</comment>
<comment type="activity regulation">
    <text evidence="1">Inhibited by UDP.</text>
</comment>
<comment type="pathway">
    <text evidence="1">Protein modification; protein glycosylation.</text>
</comment>
<comment type="subcellular location">
    <subcellularLocation>
        <location evidence="3">Golgi apparatus membrane</location>
        <topology evidence="3">Single-pass type II membrane protein</topology>
    </subcellularLocation>
</comment>
<comment type="subcellular location">
    <molecule>Alpha-1,3-mannosyl-glycoprotein 4-beta-N-acetylglucosaminyltransferase A soluble form</molecule>
    <subcellularLocation>
        <location evidence="1">Secreted</location>
    </subcellularLocation>
</comment>
<comment type="PTM">
    <text evidence="1">N-glycosylated.</text>
</comment>
<comment type="similarity">
    <text evidence="6">Belongs to the glycosyltransferase 54 family.</text>
</comment>
<protein>
    <recommendedName>
        <fullName evidence="4">Alpha-1,3-mannosyl-glycoprotein 4-beta-N-acetylglucosaminyltransferase A</fullName>
        <ecNumber evidence="1">2.4.1.145</ecNumber>
    </recommendedName>
    <alternativeName>
        <fullName>N-glycosyl-oligosaccharide-glycoprotein N-acetylglucosaminyltransferase IVa</fullName>
        <shortName>GlcNAc-T IVa</shortName>
        <shortName>GnT-IVa</shortName>
        <shortName>N-acetylglucosaminyltransferase IVa</shortName>
    </alternativeName>
    <alternativeName>
        <fullName>UDP-N-acetylglucosamine: alpha-1,3-D-mannoside beta-1,4-N-acetylglucosaminyltransferase IVa</fullName>
    </alternativeName>
    <component>
        <recommendedName>
            <fullName>Alpha-1,3-mannosyl-glycoprotein 4-beta-N-acetylglucosaminyltransferase A soluble form</fullName>
        </recommendedName>
    </component>
</protein>
<reference key="1">
    <citation type="submission" date="2005-06" db="EMBL/GenBank/DDBJ databases">
        <title>DNA sequences of macaque genes expressed in brain or testis and its evolutionary implications.</title>
        <authorList>
            <consortium name="International consortium for macaque cDNA sequencing and analysis"/>
        </authorList>
    </citation>
    <scope>NUCLEOTIDE SEQUENCE [LARGE SCALE MRNA]</scope>
    <source>
        <tissue>Testis</tissue>
    </source>
</reference>
<organism>
    <name type="scientific">Macaca fascicularis</name>
    <name type="common">Crab-eating macaque</name>
    <name type="synonym">Cynomolgus monkey</name>
    <dbReference type="NCBI Taxonomy" id="9541"/>
    <lineage>
        <taxon>Eukaryota</taxon>
        <taxon>Metazoa</taxon>
        <taxon>Chordata</taxon>
        <taxon>Craniata</taxon>
        <taxon>Vertebrata</taxon>
        <taxon>Euteleostomi</taxon>
        <taxon>Mammalia</taxon>
        <taxon>Eutheria</taxon>
        <taxon>Euarchontoglires</taxon>
        <taxon>Primates</taxon>
        <taxon>Haplorrhini</taxon>
        <taxon>Catarrhini</taxon>
        <taxon>Cercopithecidae</taxon>
        <taxon>Cercopithecinae</taxon>
        <taxon>Macaca</taxon>
    </lineage>
</organism>
<evidence type="ECO:0000250" key="1">
    <source>
        <dbReference type="UniProtKB" id="O77836"/>
    </source>
</evidence>
<evidence type="ECO:0000250" key="2">
    <source>
        <dbReference type="UniProtKB" id="Q812G0"/>
    </source>
</evidence>
<evidence type="ECO:0000250" key="3">
    <source>
        <dbReference type="UniProtKB" id="Q9D4R2"/>
    </source>
</evidence>
<evidence type="ECO:0000250" key="4">
    <source>
        <dbReference type="UniProtKB" id="Q9UM21"/>
    </source>
</evidence>
<evidence type="ECO:0000255" key="5"/>
<evidence type="ECO:0000305" key="6"/>
<sequence>MRLRNGTVATALAFITSFLTLSWYTTWQNGKEKLIAYQREFLALKERLRIAEHRISQRSSELNTIVQQFKRVGAETNGSKDALNKFSDNTLKLLKELTSKKSLQVPSIYYHLPHLLKNEGSLRPAVQIGNGRTGVSIVMGIPTVKREVKSYLIETLHSLIDNLYPEEKLDCVIVVFIGETDTDYVHGVVANLEKEFSKEISSGLVEVISPPESYYPDLTNLKETFGDSKERVRWRTKQNLDYCFLMMYAQEKGIYYIQLEDDIIVKQNYFNTIKNFALQLSSEEWMILEFSQLGFIGKMFQAPDLTLIVEFIFMFYKEKPIDWLLDHILWVKVCNPEKDAKHCDRQKANLRIRFRPSLFQHVGLHSSLSGKIQKLTDKDYMKPLLLKIHVNPPAEVSTSLKVYQGHTLEKTYMGEDFFWAITPIAGDYILFKFDKPVNVESYLFHSGNQEHPGDILLNTTVEVLPFKSEGLEISKETKDKRLEDGYFRIGKFENGVAEGMVDPSLNPISAFRLSVIQNSAVWAILNEIHIKKATK</sequence>
<feature type="chain" id="PRO_0000288583" description="Alpha-1,3-mannosyl-glycoprotein 4-beta-N-acetylglucosaminyltransferase A">
    <location>
        <begin position="1"/>
        <end position="535"/>
    </location>
</feature>
<feature type="chain" id="PRO_0000288584" description="Alpha-1,3-mannosyl-glycoprotein 4-beta-N-acetylglucosaminyltransferase A soluble form" evidence="1">
    <location>
        <begin position="93"/>
        <end position="535"/>
    </location>
</feature>
<feature type="topological domain" description="Cytoplasmic" evidence="5">
    <location>
        <begin position="1"/>
        <end position="4"/>
    </location>
</feature>
<feature type="transmembrane region" description="Helical; Signal-anchor for type II membrane protein" evidence="5">
    <location>
        <begin position="5"/>
        <end position="27"/>
    </location>
</feature>
<feature type="topological domain" description="Lumenal" evidence="5">
    <location>
        <begin position="28"/>
        <end position="535"/>
    </location>
</feature>
<feature type="coiled-coil region" evidence="5">
    <location>
        <begin position="28"/>
        <end position="63"/>
    </location>
</feature>
<feature type="modified residue" description="Phosphoserine" evidence="4">
    <location>
        <position position="474"/>
    </location>
</feature>
<feature type="glycosylation site" description="N-linked (GlcNAc...) asparagine" evidence="5">
    <location>
        <position position="77"/>
    </location>
</feature>
<feature type="glycosylation site" description="N-linked (GlcNAc...) asparagine" evidence="5">
    <location>
        <position position="458"/>
    </location>
</feature>
<gene>
    <name evidence="4" type="primary">MGAT4A</name>
    <name type="ORF">QtsA-13423</name>
</gene>
<keyword id="KW-0175">Coiled coil</keyword>
<keyword id="KW-0325">Glycoprotein</keyword>
<keyword id="KW-0328">Glycosyltransferase</keyword>
<keyword id="KW-0333">Golgi apparatus</keyword>
<keyword id="KW-0472">Membrane</keyword>
<keyword id="KW-0479">Metal-binding</keyword>
<keyword id="KW-0597">Phosphoprotein</keyword>
<keyword id="KW-1185">Reference proteome</keyword>
<keyword id="KW-0964">Secreted</keyword>
<keyword id="KW-0735">Signal-anchor</keyword>
<keyword id="KW-0808">Transferase</keyword>
<keyword id="KW-0812">Transmembrane</keyword>
<keyword id="KW-1133">Transmembrane helix</keyword>
<dbReference type="EC" id="2.4.1.145" evidence="1"/>
<dbReference type="EMBL" id="AB168604">
    <property type="protein sequence ID" value="BAE00718.1"/>
    <property type="molecule type" value="mRNA"/>
</dbReference>
<dbReference type="RefSeq" id="NP_001271500.1">
    <property type="nucleotide sequence ID" value="NM_001284571.1"/>
</dbReference>
<dbReference type="RefSeq" id="XP_005575110.1">
    <property type="nucleotide sequence ID" value="XM_005575053.4"/>
</dbReference>
<dbReference type="RefSeq" id="XP_045224717.1">
    <property type="nucleotide sequence ID" value="XM_045368782.2"/>
</dbReference>
<dbReference type="SMR" id="Q4R854"/>
<dbReference type="STRING" id="9541.ENSMFAP00000025029"/>
<dbReference type="CAZy" id="GT54">
    <property type="family name" value="Glycosyltransferase Family 54"/>
</dbReference>
<dbReference type="GlyCosmos" id="Q4R854">
    <property type="glycosylation" value="2 sites, No reported glycans"/>
</dbReference>
<dbReference type="Ensembl" id="ENSMFAT00000033176.2">
    <property type="protein sequence ID" value="ENSMFAP00000025029.1"/>
    <property type="gene ID" value="ENSMFAG00000044000.2"/>
</dbReference>
<dbReference type="GeneID" id="101866133"/>
<dbReference type="CTD" id="11320"/>
<dbReference type="VEuPathDB" id="HostDB:ENSMFAG00000044000"/>
<dbReference type="eggNOG" id="ENOG502QPQJ">
    <property type="taxonomic scope" value="Eukaryota"/>
</dbReference>
<dbReference type="GeneTree" id="ENSGT00940000159177"/>
<dbReference type="UniPathway" id="UPA00378"/>
<dbReference type="Proteomes" id="UP000233100">
    <property type="component" value="Chromosome 13"/>
</dbReference>
<dbReference type="Bgee" id="ENSMFAG00000044000">
    <property type="expression patterns" value="Expressed in adult mammalian kidney and 13 other cell types or tissues"/>
</dbReference>
<dbReference type="GO" id="GO:0005783">
    <property type="term" value="C:endoplasmic reticulum"/>
    <property type="evidence" value="ECO:0007669"/>
    <property type="project" value="TreeGrafter"/>
</dbReference>
<dbReference type="GO" id="GO:0005793">
    <property type="term" value="C:endoplasmic reticulum-Golgi intermediate compartment"/>
    <property type="evidence" value="ECO:0007669"/>
    <property type="project" value="TreeGrafter"/>
</dbReference>
<dbReference type="GO" id="GO:0005576">
    <property type="term" value="C:extracellular region"/>
    <property type="evidence" value="ECO:0007669"/>
    <property type="project" value="UniProtKB-SubCell"/>
</dbReference>
<dbReference type="GO" id="GO:0000139">
    <property type="term" value="C:Golgi membrane"/>
    <property type="evidence" value="ECO:0007669"/>
    <property type="project" value="UniProtKB-SubCell"/>
</dbReference>
<dbReference type="GO" id="GO:0005795">
    <property type="term" value="C:Golgi stack"/>
    <property type="evidence" value="ECO:0007669"/>
    <property type="project" value="TreeGrafter"/>
</dbReference>
<dbReference type="GO" id="GO:0005777">
    <property type="term" value="C:peroxisome"/>
    <property type="evidence" value="ECO:0000250"/>
    <property type="project" value="UniProtKB"/>
</dbReference>
<dbReference type="GO" id="GO:0008453">
    <property type="term" value="F:alanine-glyoxylate transaminase activity"/>
    <property type="evidence" value="ECO:0000250"/>
    <property type="project" value="UniProtKB"/>
</dbReference>
<dbReference type="GO" id="GO:0008454">
    <property type="term" value="F:alpha-1,3-mannosylglycoprotein 4-beta-N-acetylglucosaminyltransferase activity"/>
    <property type="evidence" value="ECO:0000250"/>
    <property type="project" value="UniProtKB"/>
</dbReference>
<dbReference type="GO" id="GO:0046872">
    <property type="term" value="F:metal ion binding"/>
    <property type="evidence" value="ECO:0007669"/>
    <property type="project" value="UniProtKB-KW"/>
</dbReference>
<dbReference type="GO" id="GO:0042803">
    <property type="term" value="F:protein homodimerization activity"/>
    <property type="evidence" value="ECO:0000250"/>
    <property type="project" value="UniProtKB"/>
</dbReference>
<dbReference type="GO" id="GO:0046487">
    <property type="term" value="P:glyoxylate metabolic process"/>
    <property type="evidence" value="ECO:0000250"/>
    <property type="project" value="UniProtKB"/>
</dbReference>
<dbReference type="GO" id="GO:0006491">
    <property type="term" value="P:N-glycan processing"/>
    <property type="evidence" value="ECO:0000250"/>
    <property type="project" value="UniProtKB"/>
</dbReference>
<dbReference type="GO" id="GO:0006487">
    <property type="term" value="P:protein N-linked glycosylation"/>
    <property type="evidence" value="ECO:0007669"/>
    <property type="project" value="Ensembl"/>
</dbReference>
<dbReference type="InterPro" id="IPR006759">
    <property type="entry name" value="Glyco_transf_54"/>
</dbReference>
<dbReference type="InterPro" id="IPR056576">
    <property type="entry name" value="MGAT4_A/B/C_C"/>
</dbReference>
<dbReference type="PANTHER" id="PTHR12062:SF4">
    <property type="entry name" value="ALPHA-1,3-MANNOSYL-GLYCOPROTEIN 4-BETA-N-ACETYLGLUCOSAMINYLTRANSFERASE A"/>
    <property type="match status" value="1"/>
</dbReference>
<dbReference type="PANTHER" id="PTHR12062">
    <property type="entry name" value="N-ACETYLGLUCOSAMINYLTRANSFERASE VI"/>
    <property type="match status" value="1"/>
</dbReference>
<dbReference type="Pfam" id="PF04666">
    <property type="entry name" value="MGAT4_cons"/>
    <property type="match status" value="1"/>
</dbReference>
<dbReference type="Pfam" id="PF23524">
    <property type="entry name" value="MGAT4A_C"/>
    <property type="match status" value="1"/>
</dbReference>
<proteinExistence type="evidence at transcript level"/>